<keyword id="KW-0687">Ribonucleoprotein</keyword>
<keyword id="KW-0689">Ribosomal protein</keyword>
<gene>
    <name evidence="1" type="primary">rpsU</name>
    <name type="ordered locus">amb2820</name>
</gene>
<dbReference type="EMBL" id="AP007255">
    <property type="protein sequence ID" value="BAE51624.1"/>
    <property type="status" value="ALT_INIT"/>
    <property type="molecule type" value="Genomic_DNA"/>
</dbReference>
<dbReference type="RefSeq" id="WP_002726599.1">
    <property type="nucleotide sequence ID" value="NC_007626.1"/>
</dbReference>
<dbReference type="SMR" id="Q2W3F1"/>
<dbReference type="STRING" id="342108.amb2820"/>
<dbReference type="KEGG" id="mag:amb2820"/>
<dbReference type="HOGENOM" id="CLU_159258_0_2_5"/>
<dbReference type="OrthoDB" id="9811907at2"/>
<dbReference type="Proteomes" id="UP000007058">
    <property type="component" value="Chromosome"/>
</dbReference>
<dbReference type="GO" id="GO:1990904">
    <property type="term" value="C:ribonucleoprotein complex"/>
    <property type="evidence" value="ECO:0007669"/>
    <property type="project" value="UniProtKB-KW"/>
</dbReference>
<dbReference type="GO" id="GO:0005840">
    <property type="term" value="C:ribosome"/>
    <property type="evidence" value="ECO:0007669"/>
    <property type="project" value="UniProtKB-KW"/>
</dbReference>
<dbReference type="GO" id="GO:0003735">
    <property type="term" value="F:structural constituent of ribosome"/>
    <property type="evidence" value="ECO:0007669"/>
    <property type="project" value="InterPro"/>
</dbReference>
<dbReference type="GO" id="GO:0006412">
    <property type="term" value="P:translation"/>
    <property type="evidence" value="ECO:0007669"/>
    <property type="project" value="UniProtKB-UniRule"/>
</dbReference>
<dbReference type="Gene3D" id="1.20.5.1150">
    <property type="entry name" value="Ribosomal protein S8"/>
    <property type="match status" value="1"/>
</dbReference>
<dbReference type="HAMAP" id="MF_00358">
    <property type="entry name" value="Ribosomal_bS21"/>
    <property type="match status" value="1"/>
</dbReference>
<dbReference type="InterPro" id="IPR001911">
    <property type="entry name" value="Ribosomal_bS21"/>
</dbReference>
<dbReference type="InterPro" id="IPR018278">
    <property type="entry name" value="Ribosomal_bS21_CS"/>
</dbReference>
<dbReference type="InterPro" id="IPR038380">
    <property type="entry name" value="Ribosomal_bS21_sf"/>
</dbReference>
<dbReference type="NCBIfam" id="TIGR00030">
    <property type="entry name" value="S21p"/>
    <property type="match status" value="1"/>
</dbReference>
<dbReference type="PANTHER" id="PTHR21109">
    <property type="entry name" value="MITOCHONDRIAL 28S RIBOSOMAL PROTEIN S21"/>
    <property type="match status" value="1"/>
</dbReference>
<dbReference type="PANTHER" id="PTHR21109:SF0">
    <property type="entry name" value="SMALL RIBOSOMAL SUBUNIT PROTEIN BS21M"/>
    <property type="match status" value="1"/>
</dbReference>
<dbReference type="Pfam" id="PF01165">
    <property type="entry name" value="Ribosomal_S21"/>
    <property type="match status" value="1"/>
</dbReference>
<dbReference type="PROSITE" id="PS01181">
    <property type="entry name" value="RIBOSOMAL_S21"/>
    <property type="match status" value="1"/>
</dbReference>
<feature type="chain" id="PRO_0000266700" description="Small ribosomal subunit protein bS21">
    <location>
        <begin position="1"/>
        <end position="67"/>
    </location>
</feature>
<protein>
    <recommendedName>
        <fullName evidence="1">Small ribosomal subunit protein bS21</fullName>
    </recommendedName>
    <alternativeName>
        <fullName evidence="2">30S ribosomal protein S21</fullName>
    </alternativeName>
</protein>
<evidence type="ECO:0000255" key="1">
    <source>
        <dbReference type="HAMAP-Rule" id="MF_00358"/>
    </source>
</evidence>
<evidence type="ECO:0000305" key="2"/>
<accession>Q2W3F1</accession>
<reference key="1">
    <citation type="journal article" date="2005" name="DNA Res.">
        <title>Complete genome sequence of the facultative anaerobic magnetotactic bacterium Magnetospirillum sp. strain AMB-1.</title>
        <authorList>
            <person name="Matsunaga T."/>
            <person name="Okamura Y."/>
            <person name="Fukuda Y."/>
            <person name="Wahyudi A.T."/>
            <person name="Murase Y."/>
            <person name="Takeyama H."/>
        </authorList>
    </citation>
    <scope>NUCLEOTIDE SEQUENCE [LARGE SCALE GENOMIC DNA]</scope>
    <source>
        <strain>ATCC 700264 / AMB-1</strain>
    </source>
</reference>
<comment type="similarity">
    <text evidence="1">Belongs to the bacterial ribosomal protein bS21 family.</text>
</comment>
<comment type="sequence caution" evidence="2">
    <conflict type="erroneous initiation">
        <sequence resource="EMBL-CDS" id="BAE51624"/>
    </conflict>
</comment>
<proteinExistence type="inferred from homology"/>
<sequence>MQVLVRDNNVDQALKALKKKMQREGVFREMKLRRNYEKPSERRAREKAEAVRRARKLERKRLEREGF</sequence>
<name>RS21_PARM1</name>
<organism>
    <name type="scientific">Paramagnetospirillum magneticum (strain ATCC 700264 / AMB-1)</name>
    <name type="common">Magnetospirillum magneticum</name>
    <dbReference type="NCBI Taxonomy" id="342108"/>
    <lineage>
        <taxon>Bacteria</taxon>
        <taxon>Pseudomonadati</taxon>
        <taxon>Pseudomonadota</taxon>
        <taxon>Alphaproteobacteria</taxon>
        <taxon>Rhodospirillales</taxon>
        <taxon>Magnetospirillaceae</taxon>
        <taxon>Paramagnetospirillum</taxon>
    </lineage>
</organism>